<dbReference type="EC" id="4.1.2.4" evidence="1 2"/>
<dbReference type="EMBL" id="X82174">
    <property type="protein sequence ID" value="CAA57662.1"/>
    <property type="status" value="ALT_INIT"/>
    <property type="molecule type" value="Genomic_DNA"/>
</dbReference>
<dbReference type="EMBL" id="D45912">
    <property type="protein sequence ID" value="BAA08337.1"/>
    <property type="molecule type" value="Genomic_DNA"/>
</dbReference>
<dbReference type="EMBL" id="AL009126">
    <property type="protein sequence ID" value="CAB15978.2"/>
    <property type="molecule type" value="Genomic_DNA"/>
</dbReference>
<dbReference type="PIR" id="A69619">
    <property type="entry name" value="A69619"/>
</dbReference>
<dbReference type="RefSeq" id="NP_391821.2">
    <property type="nucleotide sequence ID" value="NC_000964.3"/>
</dbReference>
<dbReference type="RefSeq" id="WP_003244069.1">
    <property type="nucleotide sequence ID" value="NZ_OZ025638.1"/>
</dbReference>
<dbReference type="SMR" id="P39121"/>
<dbReference type="FunCoup" id="P39121">
    <property type="interactions" value="409"/>
</dbReference>
<dbReference type="STRING" id="224308.BSU39420"/>
<dbReference type="jPOST" id="P39121"/>
<dbReference type="PaxDb" id="224308-BSU39420"/>
<dbReference type="EnsemblBacteria" id="CAB15978">
    <property type="protein sequence ID" value="CAB15978"/>
    <property type="gene ID" value="BSU_39420"/>
</dbReference>
<dbReference type="GeneID" id="938608"/>
<dbReference type="KEGG" id="bsu:BSU39420"/>
<dbReference type="PATRIC" id="fig|224308.179.peg.4267"/>
<dbReference type="eggNOG" id="COG0274">
    <property type="taxonomic scope" value="Bacteria"/>
</dbReference>
<dbReference type="InParanoid" id="P39121"/>
<dbReference type="OrthoDB" id="9778711at2"/>
<dbReference type="PhylomeDB" id="P39121"/>
<dbReference type="BioCyc" id="BSUB:BSU39420-MONOMER"/>
<dbReference type="UniPathway" id="UPA00002">
    <property type="reaction ID" value="UER00468"/>
</dbReference>
<dbReference type="Proteomes" id="UP000001570">
    <property type="component" value="Chromosome"/>
</dbReference>
<dbReference type="GO" id="GO:0005737">
    <property type="term" value="C:cytoplasm"/>
    <property type="evidence" value="ECO:0007669"/>
    <property type="project" value="UniProtKB-SubCell"/>
</dbReference>
<dbReference type="GO" id="GO:0004139">
    <property type="term" value="F:deoxyribose-phosphate aldolase activity"/>
    <property type="evidence" value="ECO:0000318"/>
    <property type="project" value="GO_Central"/>
</dbReference>
<dbReference type="GO" id="GO:0006018">
    <property type="term" value="P:2-deoxyribose 1-phosphate catabolic process"/>
    <property type="evidence" value="ECO:0007669"/>
    <property type="project" value="UniProtKB-UniRule"/>
</dbReference>
<dbReference type="GO" id="GO:0016052">
    <property type="term" value="P:carbohydrate catabolic process"/>
    <property type="evidence" value="ECO:0000318"/>
    <property type="project" value="GO_Central"/>
</dbReference>
<dbReference type="GO" id="GO:0009264">
    <property type="term" value="P:deoxyribonucleotide catabolic process"/>
    <property type="evidence" value="ECO:0000318"/>
    <property type="project" value="GO_Central"/>
</dbReference>
<dbReference type="CDD" id="cd00959">
    <property type="entry name" value="DeoC"/>
    <property type="match status" value="1"/>
</dbReference>
<dbReference type="FunFam" id="3.20.20.70:FF:000044">
    <property type="entry name" value="Deoxyribose-phosphate aldolase"/>
    <property type="match status" value="1"/>
</dbReference>
<dbReference type="Gene3D" id="3.20.20.70">
    <property type="entry name" value="Aldolase class I"/>
    <property type="match status" value="1"/>
</dbReference>
<dbReference type="HAMAP" id="MF_00114">
    <property type="entry name" value="DeoC_type1"/>
    <property type="match status" value="1"/>
</dbReference>
<dbReference type="InterPro" id="IPR013785">
    <property type="entry name" value="Aldolase_TIM"/>
</dbReference>
<dbReference type="InterPro" id="IPR011343">
    <property type="entry name" value="DeoC"/>
</dbReference>
<dbReference type="InterPro" id="IPR002915">
    <property type="entry name" value="DeoC/FbaB/LacD_aldolase"/>
</dbReference>
<dbReference type="InterPro" id="IPR028581">
    <property type="entry name" value="DeoC_typeI"/>
</dbReference>
<dbReference type="NCBIfam" id="TIGR00126">
    <property type="entry name" value="deoC"/>
    <property type="match status" value="1"/>
</dbReference>
<dbReference type="PANTHER" id="PTHR10889">
    <property type="entry name" value="DEOXYRIBOSE-PHOSPHATE ALDOLASE"/>
    <property type="match status" value="1"/>
</dbReference>
<dbReference type="PANTHER" id="PTHR10889:SF1">
    <property type="entry name" value="DEOXYRIBOSE-PHOSPHATE ALDOLASE"/>
    <property type="match status" value="1"/>
</dbReference>
<dbReference type="Pfam" id="PF01791">
    <property type="entry name" value="DeoC"/>
    <property type="match status" value="1"/>
</dbReference>
<dbReference type="PIRSF" id="PIRSF001357">
    <property type="entry name" value="DeoC"/>
    <property type="match status" value="1"/>
</dbReference>
<dbReference type="SMART" id="SM01133">
    <property type="entry name" value="DeoC"/>
    <property type="match status" value="1"/>
</dbReference>
<dbReference type="SUPFAM" id="SSF51569">
    <property type="entry name" value="Aldolase"/>
    <property type="match status" value="1"/>
</dbReference>
<evidence type="ECO:0000255" key="1">
    <source>
        <dbReference type="HAMAP-Rule" id="MF_00114"/>
    </source>
</evidence>
<evidence type="ECO:0000269" key="2">
    <source>
    </source>
</evidence>
<evidence type="ECO:0000303" key="3">
    <source>
    </source>
</evidence>
<evidence type="ECO:0000305" key="4"/>
<gene>
    <name evidence="1" type="primary">deoC</name>
    <name evidence="3" type="synonym">dra</name>
    <name type="ordered locus">BSU39420</name>
</gene>
<sequence length="223" mass="23261">MSLANIIDHTALKPHTQKADILKLIEEAKTYKFASVCVNPTWVELAAKELKGTGVDVCTVIGFPLGANTTETKAFETKDAISKGATEVDMVINIAALKDKEDDVVEADIRGVVEAVAGKALVKVIIETCLLTDEEKERACRLAVSAGADFVKTSTGFSTGGATKEDIALMRKTVGPDIGVKASGGVRTKEDVDTMVEAGASRIGASAGVSIVKGENASGGDNY</sequence>
<proteinExistence type="evidence at protein level"/>
<organism>
    <name type="scientific">Bacillus subtilis (strain 168)</name>
    <dbReference type="NCBI Taxonomy" id="224308"/>
    <lineage>
        <taxon>Bacteria</taxon>
        <taxon>Bacillati</taxon>
        <taxon>Bacillota</taxon>
        <taxon>Bacilli</taxon>
        <taxon>Bacillales</taxon>
        <taxon>Bacillaceae</taxon>
        <taxon>Bacillus</taxon>
    </lineage>
</organism>
<comment type="function">
    <text evidence="1 2">Catalyzes a reversible aldol reaction between acetaldehyde and D-glyceraldehyde 3-phosphate to generate 2-deoxy-D-ribose 5-phosphate.</text>
</comment>
<comment type="catalytic activity">
    <reaction evidence="1 2">
        <text>2-deoxy-D-ribose 5-phosphate = D-glyceraldehyde 3-phosphate + acetaldehyde</text>
        <dbReference type="Rhea" id="RHEA:12821"/>
        <dbReference type="ChEBI" id="CHEBI:15343"/>
        <dbReference type="ChEBI" id="CHEBI:59776"/>
        <dbReference type="ChEBI" id="CHEBI:62877"/>
        <dbReference type="EC" id="4.1.2.4"/>
    </reaction>
</comment>
<comment type="pathway">
    <text evidence="1">Carbohydrate degradation; 2-deoxy-D-ribose 1-phosphate degradation; D-glyceraldehyde 3-phosphate and acetaldehyde from 2-deoxy-alpha-D-ribose 1-phosphate: step 2/2.</text>
</comment>
<comment type="subcellular location">
    <subcellularLocation>
        <location evidence="1">Cytoplasm</location>
    </subcellularLocation>
</comment>
<comment type="induction">
    <text evidence="2">Induced by deoxyadenosine and thymidine. Repressed by DeoR and glucose.</text>
</comment>
<comment type="similarity">
    <text evidence="1">Belongs to the DeoC/FbaB aldolase family. DeoC type 1 subfamily.</text>
</comment>
<comment type="sequence caution" evidence="4">
    <conflict type="erroneous initiation">
        <sequence resource="EMBL-CDS" id="CAA57662"/>
    </conflict>
</comment>
<keyword id="KW-0963">Cytoplasm</keyword>
<keyword id="KW-0456">Lyase</keyword>
<keyword id="KW-1185">Reference proteome</keyword>
<keyword id="KW-0704">Schiff base</keyword>
<name>DEOC_BACSU</name>
<reference key="1">
    <citation type="journal article" date="1996" name="J. Bacteriol.">
        <title>Dra-nupC-pdp operon of Bacillus subtilis: nucleotide sequence, induction by deoxyribonucleosides, and transcriptional regulation by the deoR-encoded DeoR repressor protein.</title>
        <authorList>
            <person name="Saxild H.H."/>
            <person name="Andersen L.N."/>
            <person name="Hammer K."/>
        </authorList>
    </citation>
    <scope>NUCLEOTIDE SEQUENCE [GENOMIC DNA]</scope>
    <scope>FUNCTION</scope>
    <scope>CATALYTIC ACTIVITY</scope>
    <scope>INDUCTION</scope>
    <source>
        <strain>168</strain>
    </source>
</reference>
<reference key="2">
    <citation type="journal article" date="1995" name="DNA Res.">
        <title>Cloning and sequencing of a 23-kb region of the Bacillus subtilis genome between the iol and hut operons.</title>
        <authorList>
            <person name="Yoshida K."/>
            <person name="Fujimyra M."/>
            <person name="Yanai N."/>
            <person name="Fujita Y."/>
        </authorList>
    </citation>
    <scope>NUCLEOTIDE SEQUENCE [GENOMIC DNA]</scope>
    <source>
        <strain>168 / BGSC1A1</strain>
    </source>
</reference>
<reference key="3">
    <citation type="journal article" date="1997" name="Nature">
        <title>The complete genome sequence of the Gram-positive bacterium Bacillus subtilis.</title>
        <authorList>
            <person name="Kunst F."/>
            <person name="Ogasawara N."/>
            <person name="Moszer I."/>
            <person name="Albertini A.M."/>
            <person name="Alloni G."/>
            <person name="Azevedo V."/>
            <person name="Bertero M.G."/>
            <person name="Bessieres P."/>
            <person name="Bolotin A."/>
            <person name="Borchert S."/>
            <person name="Borriss R."/>
            <person name="Boursier L."/>
            <person name="Brans A."/>
            <person name="Braun M."/>
            <person name="Brignell S.C."/>
            <person name="Bron S."/>
            <person name="Brouillet S."/>
            <person name="Bruschi C.V."/>
            <person name="Caldwell B."/>
            <person name="Capuano V."/>
            <person name="Carter N.M."/>
            <person name="Choi S.-K."/>
            <person name="Codani J.-J."/>
            <person name="Connerton I.F."/>
            <person name="Cummings N.J."/>
            <person name="Daniel R.A."/>
            <person name="Denizot F."/>
            <person name="Devine K.M."/>
            <person name="Duesterhoeft A."/>
            <person name="Ehrlich S.D."/>
            <person name="Emmerson P.T."/>
            <person name="Entian K.-D."/>
            <person name="Errington J."/>
            <person name="Fabret C."/>
            <person name="Ferrari E."/>
            <person name="Foulger D."/>
            <person name="Fritz C."/>
            <person name="Fujita M."/>
            <person name="Fujita Y."/>
            <person name="Fuma S."/>
            <person name="Galizzi A."/>
            <person name="Galleron N."/>
            <person name="Ghim S.-Y."/>
            <person name="Glaser P."/>
            <person name="Goffeau A."/>
            <person name="Golightly E.J."/>
            <person name="Grandi G."/>
            <person name="Guiseppi G."/>
            <person name="Guy B.J."/>
            <person name="Haga K."/>
            <person name="Haiech J."/>
            <person name="Harwood C.R."/>
            <person name="Henaut A."/>
            <person name="Hilbert H."/>
            <person name="Holsappel S."/>
            <person name="Hosono S."/>
            <person name="Hullo M.-F."/>
            <person name="Itaya M."/>
            <person name="Jones L.-M."/>
            <person name="Joris B."/>
            <person name="Karamata D."/>
            <person name="Kasahara Y."/>
            <person name="Klaerr-Blanchard M."/>
            <person name="Klein C."/>
            <person name="Kobayashi Y."/>
            <person name="Koetter P."/>
            <person name="Koningstein G."/>
            <person name="Krogh S."/>
            <person name="Kumano M."/>
            <person name="Kurita K."/>
            <person name="Lapidus A."/>
            <person name="Lardinois S."/>
            <person name="Lauber J."/>
            <person name="Lazarevic V."/>
            <person name="Lee S.-M."/>
            <person name="Levine A."/>
            <person name="Liu H."/>
            <person name="Masuda S."/>
            <person name="Mauel C."/>
            <person name="Medigue C."/>
            <person name="Medina N."/>
            <person name="Mellado R.P."/>
            <person name="Mizuno M."/>
            <person name="Moestl D."/>
            <person name="Nakai S."/>
            <person name="Noback M."/>
            <person name="Noone D."/>
            <person name="O'Reilly M."/>
            <person name="Ogawa K."/>
            <person name="Ogiwara A."/>
            <person name="Oudega B."/>
            <person name="Park S.-H."/>
            <person name="Parro V."/>
            <person name="Pohl T.M."/>
            <person name="Portetelle D."/>
            <person name="Porwollik S."/>
            <person name="Prescott A.M."/>
            <person name="Presecan E."/>
            <person name="Pujic P."/>
            <person name="Purnelle B."/>
            <person name="Rapoport G."/>
            <person name="Rey M."/>
            <person name="Reynolds S."/>
            <person name="Rieger M."/>
            <person name="Rivolta C."/>
            <person name="Rocha E."/>
            <person name="Roche B."/>
            <person name="Rose M."/>
            <person name="Sadaie Y."/>
            <person name="Sato T."/>
            <person name="Scanlan E."/>
            <person name="Schleich S."/>
            <person name="Schroeter R."/>
            <person name="Scoffone F."/>
            <person name="Sekiguchi J."/>
            <person name="Sekowska A."/>
            <person name="Seror S.J."/>
            <person name="Serror P."/>
            <person name="Shin B.-S."/>
            <person name="Soldo B."/>
            <person name="Sorokin A."/>
            <person name="Tacconi E."/>
            <person name="Takagi T."/>
            <person name="Takahashi H."/>
            <person name="Takemaru K."/>
            <person name="Takeuchi M."/>
            <person name="Tamakoshi A."/>
            <person name="Tanaka T."/>
            <person name="Terpstra P."/>
            <person name="Tognoni A."/>
            <person name="Tosato V."/>
            <person name="Uchiyama S."/>
            <person name="Vandenbol M."/>
            <person name="Vannier F."/>
            <person name="Vassarotti A."/>
            <person name="Viari A."/>
            <person name="Wambutt R."/>
            <person name="Wedler E."/>
            <person name="Wedler H."/>
            <person name="Weitzenegger T."/>
            <person name="Winters P."/>
            <person name="Wipat A."/>
            <person name="Yamamoto H."/>
            <person name="Yamane K."/>
            <person name="Yasumoto K."/>
            <person name="Yata K."/>
            <person name="Yoshida K."/>
            <person name="Yoshikawa H.-F."/>
            <person name="Zumstein E."/>
            <person name="Yoshikawa H."/>
            <person name="Danchin A."/>
        </authorList>
    </citation>
    <scope>NUCLEOTIDE SEQUENCE [LARGE SCALE GENOMIC DNA]</scope>
    <source>
        <strain>168</strain>
    </source>
</reference>
<reference key="4">
    <citation type="journal article" date="2009" name="Microbiology">
        <title>From a consortium sequence to a unified sequence: the Bacillus subtilis 168 reference genome a decade later.</title>
        <authorList>
            <person name="Barbe V."/>
            <person name="Cruveiller S."/>
            <person name="Kunst F."/>
            <person name="Lenoble P."/>
            <person name="Meurice G."/>
            <person name="Sekowska A."/>
            <person name="Vallenet D."/>
            <person name="Wang T."/>
            <person name="Moszer I."/>
            <person name="Medigue C."/>
            <person name="Danchin A."/>
        </authorList>
    </citation>
    <scope>SEQUENCE REVISION TO C-TERMINUS</scope>
</reference>
<feature type="chain" id="PRO_0000057224" description="Deoxyribose-phosphate aldolase">
    <location>
        <begin position="1"/>
        <end position="223"/>
    </location>
</feature>
<feature type="active site" description="Proton donor/acceptor" evidence="1">
    <location>
        <position position="89"/>
    </location>
</feature>
<feature type="active site" description="Schiff-base intermediate with acetaldehyde" evidence="1">
    <location>
        <position position="152"/>
    </location>
</feature>
<feature type="active site" description="Proton donor/acceptor" evidence="1">
    <location>
        <position position="181"/>
    </location>
</feature>
<feature type="sequence conflict" description="In Ref. 1; CAA57662 and 2; BAA08337." evidence="4" ref="1 2">
    <original>GASAGVSIVKGENASGGDNY</original>
    <variation>APAQAFLS</variation>
    <location>
        <begin position="204"/>
        <end position="223"/>
    </location>
</feature>
<accession>P39121</accession>
<protein>
    <recommendedName>
        <fullName evidence="1">Deoxyribose-phosphate aldolase</fullName>
        <shortName evidence="1">DERA</shortName>
        <ecNumber evidence="1 2">4.1.2.4</ecNumber>
    </recommendedName>
    <alternativeName>
        <fullName evidence="1">2-deoxy-D-ribose 5-phosphate aldolase</fullName>
    </alternativeName>
    <alternativeName>
        <fullName evidence="1">Phosphodeoxyriboaldolase</fullName>
        <shortName evidence="1 3">Deoxyriboaldolase</shortName>
    </alternativeName>
</protein>